<evidence type="ECO:0000255" key="1">
    <source>
        <dbReference type="HAMAP-Rule" id="MF_01367"/>
    </source>
</evidence>
<evidence type="ECO:0000305" key="2"/>
<dbReference type="EMBL" id="AM406670">
    <property type="protein sequence ID" value="CAL96023.1"/>
    <property type="molecule type" value="Genomic_DNA"/>
</dbReference>
<dbReference type="RefSeq" id="WP_011767130.1">
    <property type="nucleotide sequence ID" value="NC_008702.1"/>
</dbReference>
<dbReference type="SMR" id="A1KB17"/>
<dbReference type="STRING" id="62928.azo3407"/>
<dbReference type="KEGG" id="aoa:dqs_3546"/>
<dbReference type="KEGG" id="azo:azo3407"/>
<dbReference type="eggNOG" id="COG0093">
    <property type="taxonomic scope" value="Bacteria"/>
</dbReference>
<dbReference type="HOGENOM" id="CLU_095071_2_1_4"/>
<dbReference type="OrthoDB" id="9806379at2"/>
<dbReference type="Proteomes" id="UP000002588">
    <property type="component" value="Chromosome"/>
</dbReference>
<dbReference type="GO" id="GO:0022625">
    <property type="term" value="C:cytosolic large ribosomal subunit"/>
    <property type="evidence" value="ECO:0007669"/>
    <property type="project" value="TreeGrafter"/>
</dbReference>
<dbReference type="GO" id="GO:0070180">
    <property type="term" value="F:large ribosomal subunit rRNA binding"/>
    <property type="evidence" value="ECO:0007669"/>
    <property type="project" value="TreeGrafter"/>
</dbReference>
<dbReference type="GO" id="GO:0003735">
    <property type="term" value="F:structural constituent of ribosome"/>
    <property type="evidence" value="ECO:0007669"/>
    <property type="project" value="InterPro"/>
</dbReference>
<dbReference type="GO" id="GO:0006412">
    <property type="term" value="P:translation"/>
    <property type="evidence" value="ECO:0007669"/>
    <property type="project" value="UniProtKB-UniRule"/>
</dbReference>
<dbReference type="CDD" id="cd00337">
    <property type="entry name" value="Ribosomal_uL14"/>
    <property type="match status" value="1"/>
</dbReference>
<dbReference type="FunFam" id="2.40.150.20:FF:000001">
    <property type="entry name" value="50S ribosomal protein L14"/>
    <property type="match status" value="1"/>
</dbReference>
<dbReference type="Gene3D" id="2.40.150.20">
    <property type="entry name" value="Ribosomal protein L14"/>
    <property type="match status" value="1"/>
</dbReference>
<dbReference type="HAMAP" id="MF_01367">
    <property type="entry name" value="Ribosomal_uL14"/>
    <property type="match status" value="1"/>
</dbReference>
<dbReference type="InterPro" id="IPR000218">
    <property type="entry name" value="Ribosomal_uL14"/>
</dbReference>
<dbReference type="InterPro" id="IPR005745">
    <property type="entry name" value="Ribosomal_uL14_bac-type"/>
</dbReference>
<dbReference type="InterPro" id="IPR019972">
    <property type="entry name" value="Ribosomal_uL14_CS"/>
</dbReference>
<dbReference type="InterPro" id="IPR036853">
    <property type="entry name" value="Ribosomal_uL14_sf"/>
</dbReference>
<dbReference type="NCBIfam" id="TIGR01067">
    <property type="entry name" value="rplN_bact"/>
    <property type="match status" value="1"/>
</dbReference>
<dbReference type="PANTHER" id="PTHR11761">
    <property type="entry name" value="50S/60S RIBOSOMAL PROTEIN L14/L23"/>
    <property type="match status" value="1"/>
</dbReference>
<dbReference type="PANTHER" id="PTHR11761:SF3">
    <property type="entry name" value="LARGE RIBOSOMAL SUBUNIT PROTEIN UL14M"/>
    <property type="match status" value="1"/>
</dbReference>
<dbReference type="Pfam" id="PF00238">
    <property type="entry name" value="Ribosomal_L14"/>
    <property type="match status" value="1"/>
</dbReference>
<dbReference type="SMART" id="SM01374">
    <property type="entry name" value="Ribosomal_L14"/>
    <property type="match status" value="1"/>
</dbReference>
<dbReference type="SUPFAM" id="SSF50193">
    <property type="entry name" value="Ribosomal protein L14"/>
    <property type="match status" value="1"/>
</dbReference>
<dbReference type="PROSITE" id="PS00049">
    <property type="entry name" value="RIBOSOMAL_L14"/>
    <property type="match status" value="1"/>
</dbReference>
<keyword id="KW-1185">Reference proteome</keyword>
<keyword id="KW-0687">Ribonucleoprotein</keyword>
<keyword id="KW-0689">Ribosomal protein</keyword>
<keyword id="KW-0694">RNA-binding</keyword>
<keyword id="KW-0699">rRNA-binding</keyword>
<comment type="function">
    <text evidence="1">Binds to 23S rRNA. Forms part of two intersubunit bridges in the 70S ribosome.</text>
</comment>
<comment type="subunit">
    <text evidence="1">Part of the 50S ribosomal subunit. Forms a cluster with proteins L3 and L19. In the 70S ribosome, L14 and L19 interact and together make contacts with the 16S rRNA in bridges B5 and B8.</text>
</comment>
<comment type="similarity">
    <text evidence="1">Belongs to the universal ribosomal protein uL14 family.</text>
</comment>
<proteinExistence type="inferred from homology"/>
<gene>
    <name evidence="1" type="primary">rplN</name>
    <name type="ordered locus">azo3407</name>
</gene>
<reference key="1">
    <citation type="journal article" date="2006" name="Nat. Biotechnol.">
        <title>Complete genome of the mutualistic, N2-fixing grass endophyte Azoarcus sp. strain BH72.</title>
        <authorList>
            <person name="Krause A."/>
            <person name="Ramakumar A."/>
            <person name="Bartels D."/>
            <person name="Battistoni F."/>
            <person name="Bekel T."/>
            <person name="Boch J."/>
            <person name="Boehm M."/>
            <person name="Friedrich F."/>
            <person name="Hurek T."/>
            <person name="Krause L."/>
            <person name="Linke B."/>
            <person name="McHardy A.C."/>
            <person name="Sarkar A."/>
            <person name="Schneiker S."/>
            <person name="Syed A.A."/>
            <person name="Thauer R."/>
            <person name="Vorhoelter F.-J."/>
            <person name="Weidner S."/>
            <person name="Puehler A."/>
            <person name="Reinhold-Hurek B."/>
            <person name="Kaiser O."/>
            <person name="Goesmann A."/>
        </authorList>
    </citation>
    <scope>NUCLEOTIDE SEQUENCE [LARGE SCALE GENOMIC DNA]</scope>
    <source>
        <strain>BH72</strain>
    </source>
</reference>
<accession>A1KB17</accession>
<organism>
    <name type="scientific">Azoarcus sp. (strain BH72)</name>
    <dbReference type="NCBI Taxonomy" id="418699"/>
    <lineage>
        <taxon>Bacteria</taxon>
        <taxon>Pseudomonadati</taxon>
        <taxon>Pseudomonadota</taxon>
        <taxon>Betaproteobacteria</taxon>
        <taxon>Rhodocyclales</taxon>
        <taxon>Zoogloeaceae</taxon>
        <taxon>Azoarcus</taxon>
    </lineage>
</organism>
<name>RL14_AZOSB</name>
<sequence>MIQMQSKLDVADNTGARSVMCIKVLGGSKRRYASIGDIIKVTVKDAAPRGRVKKGDVYNAVVVRTAKGVRRPDGSLVKFDNNAAVLLNNKLEPIGTRIFGPVTRELRSERFMKIVSLAPEVL</sequence>
<feature type="chain" id="PRO_1000055507" description="Large ribosomal subunit protein uL14">
    <location>
        <begin position="1"/>
        <end position="122"/>
    </location>
</feature>
<protein>
    <recommendedName>
        <fullName evidence="1">Large ribosomal subunit protein uL14</fullName>
    </recommendedName>
    <alternativeName>
        <fullName evidence="2">50S ribosomal protein L14</fullName>
    </alternativeName>
</protein>